<feature type="chain" id="PRO_1000011609" description="GTPase Der">
    <location>
        <begin position="1"/>
        <end position="438"/>
    </location>
</feature>
<feature type="domain" description="EngA-type G 1">
    <location>
        <begin position="4"/>
        <end position="168"/>
    </location>
</feature>
<feature type="domain" description="EngA-type G 2">
    <location>
        <begin position="177"/>
        <end position="352"/>
    </location>
</feature>
<feature type="domain" description="KH-like" evidence="1">
    <location>
        <begin position="353"/>
        <end position="437"/>
    </location>
</feature>
<feature type="binding site" evidence="1">
    <location>
        <begin position="10"/>
        <end position="17"/>
    </location>
    <ligand>
        <name>GTP</name>
        <dbReference type="ChEBI" id="CHEBI:37565"/>
        <label>1</label>
    </ligand>
</feature>
<feature type="binding site" evidence="1">
    <location>
        <begin position="57"/>
        <end position="61"/>
    </location>
    <ligand>
        <name>GTP</name>
        <dbReference type="ChEBI" id="CHEBI:37565"/>
        <label>1</label>
    </ligand>
</feature>
<feature type="binding site" evidence="1">
    <location>
        <begin position="120"/>
        <end position="123"/>
    </location>
    <ligand>
        <name>GTP</name>
        <dbReference type="ChEBI" id="CHEBI:37565"/>
        <label>1</label>
    </ligand>
</feature>
<feature type="binding site" evidence="1">
    <location>
        <begin position="183"/>
        <end position="190"/>
    </location>
    <ligand>
        <name>GTP</name>
        <dbReference type="ChEBI" id="CHEBI:37565"/>
        <label>2</label>
    </ligand>
</feature>
<feature type="binding site" evidence="1">
    <location>
        <begin position="230"/>
        <end position="234"/>
    </location>
    <ligand>
        <name>GTP</name>
        <dbReference type="ChEBI" id="CHEBI:37565"/>
        <label>2</label>
    </ligand>
</feature>
<feature type="binding site" evidence="1">
    <location>
        <begin position="295"/>
        <end position="298"/>
    </location>
    <ligand>
        <name>GTP</name>
        <dbReference type="ChEBI" id="CHEBI:37565"/>
        <label>2</label>
    </ligand>
</feature>
<proteinExistence type="inferred from homology"/>
<reference key="1">
    <citation type="journal article" date="2006" name="Genome Res.">
        <title>Skewed genomic variability in strains of the toxigenic bacterial pathogen, Clostridium perfringens.</title>
        <authorList>
            <person name="Myers G.S.A."/>
            <person name="Rasko D.A."/>
            <person name="Cheung J.K."/>
            <person name="Ravel J."/>
            <person name="Seshadri R."/>
            <person name="DeBoy R.T."/>
            <person name="Ren Q."/>
            <person name="Varga J."/>
            <person name="Awad M.M."/>
            <person name="Brinkac L.M."/>
            <person name="Daugherty S.C."/>
            <person name="Haft D.H."/>
            <person name="Dodson R.J."/>
            <person name="Madupu R."/>
            <person name="Nelson W.C."/>
            <person name="Rosovitz M.J."/>
            <person name="Sullivan S.A."/>
            <person name="Khouri H."/>
            <person name="Dimitrov G.I."/>
            <person name="Watkins K.L."/>
            <person name="Mulligan S."/>
            <person name="Benton J."/>
            <person name="Radune D."/>
            <person name="Fisher D.J."/>
            <person name="Atkins H.S."/>
            <person name="Hiscox T."/>
            <person name="Jost B.H."/>
            <person name="Billington S.J."/>
            <person name="Songer J.G."/>
            <person name="McClane B.A."/>
            <person name="Titball R.W."/>
            <person name="Rood J.I."/>
            <person name="Melville S.B."/>
            <person name="Paulsen I.T."/>
        </authorList>
    </citation>
    <scope>NUCLEOTIDE SEQUENCE [LARGE SCALE GENOMIC DNA]</scope>
    <source>
        <strain>ATCC 13124 / DSM 756 / JCM 1290 / NCIMB 6125 / NCTC 8237 / S 107 / Type A</strain>
    </source>
</reference>
<comment type="function">
    <text evidence="1">GTPase that plays an essential role in the late steps of ribosome biogenesis.</text>
</comment>
<comment type="subunit">
    <text evidence="1">Associates with the 50S ribosomal subunit.</text>
</comment>
<comment type="similarity">
    <text evidence="1">Belongs to the TRAFAC class TrmE-Era-EngA-EngB-Septin-like GTPase superfamily. EngA (Der) GTPase family.</text>
</comment>
<keyword id="KW-0342">GTP-binding</keyword>
<keyword id="KW-0547">Nucleotide-binding</keyword>
<keyword id="KW-0677">Repeat</keyword>
<keyword id="KW-0690">Ribosome biogenesis</keyword>
<organism>
    <name type="scientific">Clostridium perfringens (strain ATCC 13124 / DSM 756 / JCM 1290 / NCIMB 6125 / NCTC 8237 / Type A)</name>
    <dbReference type="NCBI Taxonomy" id="195103"/>
    <lineage>
        <taxon>Bacteria</taxon>
        <taxon>Bacillati</taxon>
        <taxon>Bacillota</taxon>
        <taxon>Clostridia</taxon>
        <taxon>Eubacteriales</taxon>
        <taxon>Clostridiaceae</taxon>
        <taxon>Clostridium</taxon>
    </lineage>
</organism>
<sequence>MSKPIVAMVGRPNVGKSTLFNKLAGKRISIVQDTPGVTRDRVYAESEWLNRKFTMIDTGGIEPESSDIIVKQMRRQAQIAIEMADVIVFVVDGKEGLTAADQEVAQMLRKSKKPVVLVVNKIDRLALEENSYEFYNLGIGDPITISASQGLGLGDMLDEVVKYFNDPSEDEEDDEYIRIAMIGKPNVGKSSLINRLLGEERVIVSNVPGTTRDSIDSYLETEDGKFILVDTAGLRRKSKVKEEIERYSVIRTYAAIEKADVAILVIDAEQGITEQDEKIIGYAHEMNKAIMVVVNKWDLIEKDDKTLSNYQKDLQQKLKFMPYAKYLFISALTGQRVHKILSTAKYCYDNYSKRVSTGLLNDVISKAVLMKEPPVVALKRLKIYYATQVATKPPKFVFFVNDPNLLHFSYGRYLENQLRESFDFDGTGIEIEYRARKE</sequence>
<gene>
    <name evidence="1" type="primary">der</name>
    <name type="synonym">engA</name>
    <name type="ordered locus">CPF_2008</name>
</gene>
<name>DER_CLOP1</name>
<accession>Q0TPJ9</accession>
<evidence type="ECO:0000255" key="1">
    <source>
        <dbReference type="HAMAP-Rule" id="MF_00195"/>
    </source>
</evidence>
<protein>
    <recommendedName>
        <fullName evidence="1">GTPase Der</fullName>
    </recommendedName>
    <alternativeName>
        <fullName evidence="1">GTP-binding protein EngA</fullName>
    </alternativeName>
</protein>
<dbReference type="EMBL" id="CP000246">
    <property type="protein sequence ID" value="ABG82453.1"/>
    <property type="molecule type" value="Genomic_DNA"/>
</dbReference>
<dbReference type="RefSeq" id="WP_003458514.1">
    <property type="nucleotide sequence ID" value="NC_008261.1"/>
</dbReference>
<dbReference type="SMR" id="Q0TPJ9"/>
<dbReference type="STRING" id="195103.CPF_2008"/>
<dbReference type="PaxDb" id="195103-CPF_2008"/>
<dbReference type="GeneID" id="93001708"/>
<dbReference type="KEGG" id="cpf:CPF_2008"/>
<dbReference type="eggNOG" id="COG1160">
    <property type="taxonomic scope" value="Bacteria"/>
</dbReference>
<dbReference type="HOGENOM" id="CLU_016077_6_2_9"/>
<dbReference type="Proteomes" id="UP000001823">
    <property type="component" value="Chromosome"/>
</dbReference>
<dbReference type="GO" id="GO:0016887">
    <property type="term" value="F:ATP hydrolysis activity"/>
    <property type="evidence" value="ECO:0007669"/>
    <property type="project" value="InterPro"/>
</dbReference>
<dbReference type="GO" id="GO:0005525">
    <property type="term" value="F:GTP binding"/>
    <property type="evidence" value="ECO:0007669"/>
    <property type="project" value="UniProtKB-UniRule"/>
</dbReference>
<dbReference type="GO" id="GO:0043022">
    <property type="term" value="F:ribosome binding"/>
    <property type="evidence" value="ECO:0007669"/>
    <property type="project" value="TreeGrafter"/>
</dbReference>
<dbReference type="GO" id="GO:0042254">
    <property type="term" value="P:ribosome biogenesis"/>
    <property type="evidence" value="ECO:0007669"/>
    <property type="project" value="UniProtKB-KW"/>
</dbReference>
<dbReference type="CDD" id="cd01894">
    <property type="entry name" value="EngA1"/>
    <property type="match status" value="1"/>
</dbReference>
<dbReference type="CDD" id="cd01895">
    <property type="entry name" value="EngA2"/>
    <property type="match status" value="1"/>
</dbReference>
<dbReference type="FunFam" id="3.30.300.20:FF:000004">
    <property type="entry name" value="GTPase Der"/>
    <property type="match status" value="1"/>
</dbReference>
<dbReference type="FunFam" id="3.40.50.300:FF:000040">
    <property type="entry name" value="GTPase Der"/>
    <property type="match status" value="1"/>
</dbReference>
<dbReference type="FunFam" id="3.40.50.300:FF:000057">
    <property type="entry name" value="GTPase Der"/>
    <property type="match status" value="1"/>
</dbReference>
<dbReference type="Gene3D" id="3.30.300.20">
    <property type="match status" value="1"/>
</dbReference>
<dbReference type="Gene3D" id="3.40.50.300">
    <property type="entry name" value="P-loop containing nucleotide triphosphate hydrolases"/>
    <property type="match status" value="2"/>
</dbReference>
<dbReference type="HAMAP" id="MF_00195">
    <property type="entry name" value="GTPase_Der"/>
    <property type="match status" value="1"/>
</dbReference>
<dbReference type="InterPro" id="IPR003593">
    <property type="entry name" value="AAA+_ATPase"/>
</dbReference>
<dbReference type="InterPro" id="IPR031166">
    <property type="entry name" value="G_ENGA"/>
</dbReference>
<dbReference type="InterPro" id="IPR006073">
    <property type="entry name" value="GTP-bd"/>
</dbReference>
<dbReference type="InterPro" id="IPR016484">
    <property type="entry name" value="GTPase_Der"/>
</dbReference>
<dbReference type="InterPro" id="IPR032859">
    <property type="entry name" value="KH_dom-like"/>
</dbReference>
<dbReference type="InterPro" id="IPR015946">
    <property type="entry name" value="KH_dom-like_a/b"/>
</dbReference>
<dbReference type="InterPro" id="IPR027417">
    <property type="entry name" value="P-loop_NTPase"/>
</dbReference>
<dbReference type="InterPro" id="IPR005225">
    <property type="entry name" value="Small_GTP-bd"/>
</dbReference>
<dbReference type="NCBIfam" id="TIGR03594">
    <property type="entry name" value="GTPase_EngA"/>
    <property type="match status" value="1"/>
</dbReference>
<dbReference type="NCBIfam" id="TIGR00231">
    <property type="entry name" value="small_GTP"/>
    <property type="match status" value="2"/>
</dbReference>
<dbReference type="PANTHER" id="PTHR43834">
    <property type="entry name" value="GTPASE DER"/>
    <property type="match status" value="1"/>
</dbReference>
<dbReference type="PANTHER" id="PTHR43834:SF6">
    <property type="entry name" value="GTPASE DER"/>
    <property type="match status" value="1"/>
</dbReference>
<dbReference type="Pfam" id="PF14714">
    <property type="entry name" value="KH_dom-like"/>
    <property type="match status" value="1"/>
</dbReference>
<dbReference type="Pfam" id="PF01926">
    <property type="entry name" value="MMR_HSR1"/>
    <property type="match status" value="2"/>
</dbReference>
<dbReference type="PIRSF" id="PIRSF006485">
    <property type="entry name" value="GTP-binding_EngA"/>
    <property type="match status" value="1"/>
</dbReference>
<dbReference type="PRINTS" id="PR00326">
    <property type="entry name" value="GTP1OBG"/>
</dbReference>
<dbReference type="SMART" id="SM00382">
    <property type="entry name" value="AAA"/>
    <property type="match status" value="2"/>
</dbReference>
<dbReference type="SUPFAM" id="SSF52540">
    <property type="entry name" value="P-loop containing nucleoside triphosphate hydrolases"/>
    <property type="match status" value="2"/>
</dbReference>
<dbReference type="PROSITE" id="PS51712">
    <property type="entry name" value="G_ENGA"/>
    <property type="match status" value="2"/>
</dbReference>